<name>TBCC1_XENTR</name>
<feature type="chain" id="PRO_0000304950" description="TBCC domain-containing protein 1">
    <location>
        <begin position="1"/>
        <end position="547"/>
    </location>
</feature>
<feature type="domain" description="C-CAP/cofactor C-like" evidence="2">
    <location>
        <begin position="304"/>
        <end position="435"/>
    </location>
</feature>
<feature type="splice variant" id="VSP_028141" description="In isoform 2." evidence="3">
    <original>VDGLNKRAKVACNTYK</original>
    <variation>GQTTVFYGELCPHVCM</variation>
    <location>
        <begin position="287"/>
        <end position="302"/>
    </location>
</feature>
<feature type="splice variant" id="VSP_028142" description="In isoform 2." evidence="3">
    <location>
        <begin position="303"/>
        <end position="547"/>
    </location>
</feature>
<accession>A1L0Z4</accession>
<accession>Q28GJ9</accession>
<sequence length="547" mass="62766">MDDSRVQLWVKTDPFLLGALQIPPPEKFSMHYLRKMATYVRTRASEGCYPRLCWCMWRHIACGKLQILEETAWLYFETFLSVFERSVAESLNWAEVASTCPSSEKYEEVKSKLSVDTLKFMLFLYIQQINKISLRSPLIGNEWPSPRGRSPISDFAAQSSFYNKVWDDYSHYNFIHNHLTYILELLMEPNQLSKVSQFSHCILISAEVVTALGFVIEGTVDKNRVVNAFLDLAIWQPVQIKSGFIETLGSFSFQKLQAWIKECLVINPFGITSCIKSGTKLSWAQQVDGLNKRAKVACNTYKVPHTHRMVVMSQISKQTLAKSSKTLVDARVKIHRCSDCYIYLLSPLRSVTVEKCQNCTIVLGPVQTVLHIQMCYNVKIIAVCQRLSLLSTTNCTFHVLTPTRPLFYCGNQGVVLAPFHISYSMLEDHMAHTGLATVPNSWDRPFFFSTESSNSHIWRLLLPEEFFTFVVPFEMEGDTTEIPGGLPPAYSTSVQQRQQKIRMWQETVKDAGLTREQRKQLQAVVEMKFNEWLIKTENRHQLDSLVS</sequence>
<keyword id="KW-0025">Alternative splicing</keyword>
<keyword id="KW-0963">Cytoplasm</keyword>
<keyword id="KW-0206">Cytoskeleton</keyword>
<keyword id="KW-1185">Reference proteome</keyword>
<evidence type="ECO:0000250" key="1"/>
<evidence type="ECO:0000255" key="2">
    <source>
        <dbReference type="PROSITE-ProRule" id="PRU00659"/>
    </source>
</evidence>
<evidence type="ECO:0000303" key="3">
    <source ref="1"/>
</evidence>
<evidence type="ECO:0000305" key="4"/>
<organism>
    <name type="scientific">Xenopus tropicalis</name>
    <name type="common">Western clawed frog</name>
    <name type="synonym">Silurana tropicalis</name>
    <dbReference type="NCBI Taxonomy" id="8364"/>
    <lineage>
        <taxon>Eukaryota</taxon>
        <taxon>Metazoa</taxon>
        <taxon>Chordata</taxon>
        <taxon>Craniata</taxon>
        <taxon>Vertebrata</taxon>
        <taxon>Euteleostomi</taxon>
        <taxon>Amphibia</taxon>
        <taxon>Batrachia</taxon>
        <taxon>Anura</taxon>
        <taxon>Pipoidea</taxon>
        <taxon>Pipidae</taxon>
        <taxon>Xenopodinae</taxon>
        <taxon>Xenopus</taxon>
        <taxon>Silurana</taxon>
    </lineage>
</organism>
<protein>
    <recommendedName>
        <fullName>TBCC domain-containing protein 1</fullName>
    </recommendedName>
</protein>
<gene>
    <name type="primary">tbccd1</name>
    <name type="ORF">TEgg114l12.1</name>
</gene>
<proteinExistence type="evidence at transcript level"/>
<comment type="function">
    <text evidence="1">May play a role in the regulation of centrosome and Golgi apparatus positioning.</text>
</comment>
<comment type="subcellular location">
    <subcellularLocation>
        <location evidence="1">Cytoplasm</location>
        <location evidence="1">Cytoskeleton</location>
        <location evidence="1">Microtubule organizing center</location>
        <location evidence="1">Centrosome</location>
    </subcellularLocation>
    <subcellularLocation>
        <location evidence="1">Cytoplasm</location>
        <location evidence="1">Cytoskeleton</location>
        <location evidence="1">Spindle pole</location>
    </subcellularLocation>
</comment>
<comment type="alternative products">
    <event type="alternative splicing"/>
    <isoform>
        <id>A1L0Z4-1</id>
        <name>1</name>
        <sequence type="displayed"/>
    </isoform>
    <isoform>
        <id>A1L0Z4-2</id>
        <name>2</name>
        <sequence type="described" ref="VSP_028141 VSP_028142"/>
    </isoform>
</comment>
<comment type="similarity">
    <text evidence="4">Belongs to the TBCC family.</text>
</comment>
<dbReference type="EMBL" id="CR761361">
    <property type="protein sequence ID" value="CAJ81373.1"/>
    <property type="molecule type" value="mRNA"/>
</dbReference>
<dbReference type="EMBL" id="BC127345">
    <property type="protein sequence ID" value="AAI27346.1"/>
    <property type="molecule type" value="mRNA"/>
</dbReference>
<dbReference type="RefSeq" id="NP_001016961.2">
    <molecule id="A1L0Z4-1"/>
    <property type="nucleotide sequence ID" value="NM_001016961.3"/>
</dbReference>
<dbReference type="SMR" id="A1L0Z4"/>
<dbReference type="FunCoup" id="A1L0Z4">
    <property type="interactions" value="574"/>
</dbReference>
<dbReference type="STRING" id="8364.ENSXETP00000002811"/>
<dbReference type="PaxDb" id="8364-ENSXETP00000053835"/>
<dbReference type="GeneID" id="549715"/>
<dbReference type="KEGG" id="xtr:549715"/>
<dbReference type="AGR" id="Xenbase:XB-GENE-5736157"/>
<dbReference type="CTD" id="55171"/>
<dbReference type="Xenbase" id="XB-GENE-5736157">
    <property type="gene designation" value="tbccd1"/>
</dbReference>
<dbReference type="eggNOG" id="KOG4416">
    <property type="taxonomic scope" value="Eukaryota"/>
</dbReference>
<dbReference type="HOGENOM" id="CLU_016712_1_1_1"/>
<dbReference type="InParanoid" id="A1L0Z4"/>
<dbReference type="OMA" id="VPNAWDQ"/>
<dbReference type="OrthoDB" id="427777at2759"/>
<dbReference type="PhylomeDB" id="A1L0Z4"/>
<dbReference type="TreeFam" id="TF329418"/>
<dbReference type="Proteomes" id="UP000008143">
    <property type="component" value="Chromosome 9"/>
</dbReference>
<dbReference type="Bgee" id="ENSXETG00000013351">
    <property type="expression patterns" value="Expressed in egg cell and 12 other cell types or tissues"/>
</dbReference>
<dbReference type="GO" id="GO:0005813">
    <property type="term" value="C:centrosome"/>
    <property type="evidence" value="ECO:0007669"/>
    <property type="project" value="UniProtKB-SubCell"/>
</dbReference>
<dbReference type="GO" id="GO:0005737">
    <property type="term" value="C:cytoplasm"/>
    <property type="evidence" value="ECO:0007669"/>
    <property type="project" value="UniProtKB-KW"/>
</dbReference>
<dbReference type="GO" id="GO:0000922">
    <property type="term" value="C:spindle pole"/>
    <property type="evidence" value="ECO:0007669"/>
    <property type="project" value="UniProtKB-SubCell"/>
</dbReference>
<dbReference type="Gene3D" id="2.160.20.70">
    <property type="match status" value="1"/>
</dbReference>
<dbReference type="InterPro" id="IPR017901">
    <property type="entry name" value="C-CAP_CF_C-like"/>
</dbReference>
<dbReference type="InterPro" id="IPR016098">
    <property type="entry name" value="CAP/MinC_C"/>
</dbReference>
<dbReference type="InterPro" id="IPR036223">
    <property type="entry name" value="CAP_C_sf"/>
</dbReference>
<dbReference type="InterPro" id="IPR006599">
    <property type="entry name" value="CARP_motif"/>
</dbReference>
<dbReference type="InterPro" id="IPR039589">
    <property type="entry name" value="TBCC1"/>
</dbReference>
<dbReference type="InterPro" id="IPR012945">
    <property type="entry name" value="Tubulin-bd_cofactor_C_dom"/>
</dbReference>
<dbReference type="PANTHER" id="PTHR16052">
    <property type="entry name" value="TBCC DOMAIN-CONTAINING PROTEIN 1"/>
    <property type="match status" value="1"/>
</dbReference>
<dbReference type="PANTHER" id="PTHR16052:SF0">
    <property type="entry name" value="TBCC DOMAIN-CONTAINING PROTEIN 1"/>
    <property type="match status" value="1"/>
</dbReference>
<dbReference type="Pfam" id="PF07986">
    <property type="entry name" value="TBCC"/>
    <property type="match status" value="1"/>
</dbReference>
<dbReference type="SMART" id="SM00673">
    <property type="entry name" value="CARP"/>
    <property type="match status" value="2"/>
</dbReference>
<dbReference type="SUPFAM" id="SSF69340">
    <property type="entry name" value="C-terminal domain of adenylylcyclase associated protein"/>
    <property type="match status" value="1"/>
</dbReference>
<dbReference type="PROSITE" id="PS51329">
    <property type="entry name" value="C_CAP_COFACTOR_C"/>
    <property type="match status" value="1"/>
</dbReference>
<reference key="1">
    <citation type="submission" date="2006-10" db="EMBL/GenBank/DDBJ databases">
        <authorList>
            <consortium name="Sanger Xenopus tropicalis EST/cDNA project"/>
        </authorList>
    </citation>
    <scope>NUCLEOTIDE SEQUENCE [LARGE SCALE MRNA] (ISOFORM 2)</scope>
    <source>
        <tissue>Egg</tissue>
    </source>
</reference>
<reference key="2">
    <citation type="submission" date="2006-11" db="EMBL/GenBank/DDBJ databases">
        <authorList>
            <consortium name="NIH - Xenopus Gene Collection (XGC) project"/>
        </authorList>
    </citation>
    <scope>NUCLEOTIDE SEQUENCE [LARGE SCALE MRNA] (ISOFORM 1)</scope>
    <source>
        <strain>N6</strain>
        <tissue>Oviduct</tissue>
    </source>
</reference>